<sequence>MARYLGPKAKLSRREGTDLFLKSARRSIADKAKFDSKPGQHGRTSGARTSDYGLQLREKQKVKRMYGVLEKQFRRYFEAAERLKGNTGANLLGLLECRLDNVVYRMGFGSTRAEARQLVSHKAITVNGQSVNIASYLVKAGDVVAVREKSKKQARIVEALQLAQQVGMPVWVEVNADKVEGTFKKVPDRDEFGADINESLIVELYSR</sequence>
<comment type="function">
    <text evidence="1">One of the primary rRNA binding proteins, it binds directly to 16S rRNA where it nucleates assembly of the body of the 30S subunit.</text>
</comment>
<comment type="function">
    <text evidence="1">With S5 and S12 plays an important role in translational accuracy.</text>
</comment>
<comment type="subunit">
    <text evidence="1">Part of the 30S ribosomal subunit. Contacts protein S5. The interaction surface between S4 and S5 is involved in control of translational fidelity.</text>
</comment>
<comment type="similarity">
    <text evidence="1">Belongs to the universal ribosomal protein uS4 family.</text>
</comment>
<name>RS4_ACIET</name>
<protein>
    <recommendedName>
        <fullName evidence="1">Small ribosomal subunit protein uS4</fullName>
    </recommendedName>
    <alternativeName>
        <fullName evidence="3">30S ribosomal protein S4</fullName>
    </alternativeName>
</protein>
<evidence type="ECO:0000255" key="1">
    <source>
        <dbReference type="HAMAP-Rule" id="MF_01306"/>
    </source>
</evidence>
<evidence type="ECO:0000256" key="2">
    <source>
        <dbReference type="SAM" id="MobiDB-lite"/>
    </source>
</evidence>
<evidence type="ECO:0000305" key="3"/>
<keyword id="KW-1185">Reference proteome</keyword>
<keyword id="KW-0687">Ribonucleoprotein</keyword>
<keyword id="KW-0689">Ribosomal protein</keyword>
<keyword id="KW-0694">RNA-binding</keyword>
<keyword id="KW-0699">rRNA-binding</keyword>
<gene>
    <name evidence="1" type="primary">rpsD</name>
    <name type="ordered locus">Dtpsy_0397</name>
</gene>
<proteinExistence type="inferred from homology"/>
<feature type="chain" id="PRO_1000165400" description="Small ribosomal subunit protein uS4">
    <location>
        <begin position="1"/>
        <end position="207"/>
    </location>
</feature>
<feature type="domain" description="S4 RNA-binding" evidence="1">
    <location>
        <begin position="97"/>
        <end position="157"/>
    </location>
</feature>
<feature type="region of interest" description="Disordered" evidence="2">
    <location>
        <begin position="31"/>
        <end position="53"/>
    </location>
</feature>
<reference key="1">
    <citation type="submission" date="2009-01" db="EMBL/GenBank/DDBJ databases">
        <title>Complete sequence of Diaphorobacter sp. TPSY.</title>
        <authorList>
            <consortium name="US DOE Joint Genome Institute"/>
            <person name="Lucas S."/>
            <person name="Copeland A."/>
            <person name="Lapidus A."/>
            <person name="Glavina del Rio T."/>
            <person name="Tice H."/>
            <person name="Bruce D."/>
            <person name="Goodwin L."/>
            <person name="Pitluck S."/>
            <person name="Chertkov O."/>
            <person name="Brettin T."/>
            <person name="Detter J.C."/>
            <person name="Han C."/>
            <person name="Larimer F."/>
            <person name="Land M."/>
            <person name="Hauser L."/>
            <person name="Kyrpides N."/>
            <person name="Mikhailova N."/>
            <person name="Coates J.D."/>
        </authorList>
    </citation>
    <scope>NUCLEOTIDE SEQUENCE [LARGE SCALE GENOMIC DNA]</scope>
    <source>
        <strain>TPSY</strain>
    </source>
</reference>
<accession>B9MBW1</accession>
<dbReference type="EMBL" id="CP001392">
    <property type="protein sequence ID" value="ACM31881.1"/>
    <property type="molecule type" value="Genomic_DNA"/>
</dbReference>
<dbReference type="RefSeq" id="WP_012655444.1">
    <property type="nucleotide sequence ID" value="NC_011992.1"/>
</dbReference>
<dbReference type="SMR" id="B9MBW1"/>
<dbReference type="GeneID" id="84683089"/>
<dbReference type="KEGG" id="dia:Dtpsy_0397"/>
<dbReference type="eggNOG" id="COG0522">
    <property type="taxonomic scope" value="Bacteria"/>
</dbReference>
<dbReference type="HOGENOM" id="CLU_092403_0_2_4"/>
<dbReference type="Proteomes" id="UP000000450">
    <property type="component" value="Chromosome"/>
</dbReference>
<dbReference type="GO" id="GO:0015935">
    <property type="term" value="C:small ribosomal subunit"/>
    <property type="evidence" value="ECO:0007669"/>
    <property type="project" value="InterPro"/>
</dbReference>
<dbReference type="GO" id="GO:0019843">
    <property type="term" value="F:rRNA binding"/>
    <property type="evidence" value="ECO:0007669"/>
    <property type="project" value="UniProtKB-UniRule"/>
</dbReference>
<dbReference type="GO" id="GO:0003735">
    <property type="term" value="F:structural constituent of ribosome"/>
    <property type="evidence" value="ECO:0007669"/>
    <property type="project" value="InterPro"/>
</dbReference>
<dbReference type="GO" id="GO:0042274">
    <property type="term" value="P:ribosomal small subunit biogenesis"/>
    <property type="evidence" value="ECO:0007669"/>
    <property type="project" value="TreeGrafter"/>
</dbReference>
<dbReference type="GO" id="GO:0006412">
    <property type="term" value="P:translation"/>
    <property type="evidence" value="ECO:0007669"/>
    <property type="project" value="UniProtKB-UniRule"/>
</dbReference>
<dbReference type="CDD" id="cd00165">
    <property type="entry name" value="S4"/>
    <property type="match status" value="1"/>
</dbReference>
<dbReference type="FunFam" id="1.10.1050.10:FF:000001">
    <property type="entry name" value="30S ribosomal protein S4"/>
    <property type="match status" value="1"/>
</dbReference>
<dbReference type="FunFam" id="3.10.290.10:FF:000001">
    <property type="entry name" value="30S ribosomal protein S4"/>
    <property type="match status" value="1"/>
</dbReference>
<dbReference type="Gene3D" id="1.10.1050.10">
    <property type="entry name" value="Ribosomal Protein S4 Delta 41, Chain A, domain 1"/>
    <property type="match status" value="1"/>
</dbReference>
<dbReference type="Gene3D" id="3.10.290.10">
    <property type="entry name" value="RNA-binding S4 domain"/>
    <property type="match status" value="1"/>
</dbReference>
<dbReference type="HAMAP" id="MF_01306_B">
    <property type="entry name" value="Ribosomal_uS4_B"/>
    <property type="match status" value="1"/>
</dbReference>
<dbReference type="InterPro" id="IPR022801">
    <property type="entry name" value="Ribosomal_uS4"/>
</dbReference>
<dbReference type="InterPro" id="IPR005709">
    <property type="entry name" value="Ribosomal_uS4_bac-type"/>
</dbReference>
<dbReference type="InterPro" id="IPR018079">
    <property type="entry name" value="Ribosomal_uS4_CS"/>
</dbReference>
<dbReference type="InterPro" id="IPR001912">
    <property type="entry name" value="Ribosomal_uS4_N"/>
</dbReference>
<dbReference type="InterPro" id="IPR002942">
    <property type="entry name" value="S4_RNA-bd"/>
</dbReference>
<dbReference type="InterPro" id="IPR036986">
    <property type="entry name" value="S4_RNA-bd_sf"/>
</dbReference>
<dbReference type="NCBIfam" id="NF003717">
    <property type="entry name" value="PRK05327.1"/>
    <property type="match status" value="1"/>
</dbReference>
<dbReference type="NCBIfam" id="TIGR01017">
    <property type="entry name" value="rpsD_bact"/>
    <property type="match status" value="1"/>
</dbReference>
<dbReference type="PANTHER" id="PTHR11831">
    <property type="entry name" value="30S 40S RIBOSOMAL PROTEIN"/>
    <property type="match status" value="1"/>
</dbReference>
<dbReference type="PANTHER" id="PTHR11831:SF4">
    <property type="entry name" value="SMALL RIBOSOMAL SUBUNIT PROTEIN US4M"/>
    <property type="match status" value="1"/>
</dbReference>
<dbReference type="Pfam" id="PF00163">
    <property type="entry name" value="Ribosomal_S4"/>
    <property type="match status" value="1"/>
</dbReference>
<dbReference type="Pfam" id="PF01479">
    <property type="entry name" value="S4"/>
    <property type="match status" value="1"/>
</dbReference>
<dbReference type="SMART" id="SM01390">
    <property type="entry name" value="Ribosomal_S4"/>
    <property type="match status" value="1"/>
</dbReference>
<dbReference type="SMART" id="SM00363">
    <property type="entry name" value="S4"/>
    <property type="match status" value="1"/>
</dbReference>
<dbReference type="SUPFAM" id="SSF55174">
    <property type="entry name" value="Alpha-L RNA-binding motif"/>
    <property type="match status" value="1"/>
</dbReference>
<dbReference type="PROSITE" id="PS00632">
    <property type="entry name" value="RIBOSOMAL_S4"/>
    <property type="match status" value="1"/>
</dbReference>
<dbReference type="PROSITE" id="PS50889">
    <property type="entry name" value="S4"/>
    <property type="match status" value="1"/>
</dbReference>
<organism>
    <name type="scientific">Acidovorax ebreus (strain TPSY)</name>
    <name type="common">Diaphorobacter sp. (strain TPSY)</name>
    <dbReference type="NCBI Taxonomy" id="535289"/>
    <lineage>
        <taxon>Bacteria</taxon>
        <taxon>Pseudomonadati</taxon>
        <taxon>Pseudomonadota</taxon>
        <taxon>Betaproteobacteria</taxon>
        <taxon>Burkholderiales</taxon>
        <taxon>Comamonadaceae</taxon>
        <taxon>Diaphorobacter</taxon>
    </lineage>
</organism>